<gene>
    <name type="primary">tdcA</name>
    <name type="ordered locus">SF3158</name>
    <name type="ordered locus">S3370</name>
</gene>
<organism>
    <name type="scientific">Shigella flexneri</name>
    <dbReference type="NCBI Taxonomy" id="623"/>
    <lineage>
        <taxon>Bacteria</taxon>
        <taxon>Pseudomonadati</taxon>
        <taxon>Pseudomonadota</taxon>
        <taxon>Gammaproteobacteria</taxon>
        <taxon>Enterobacterales</taxon>
        <taxon>Enterobacteriaceae</taxon>
        <taxon>Shigella</taxon>
    </lineage>
</organism>
<proteinExistence type="inferred from homology"/>
<accession>P0ACQ9</accession>
<accession>P11036</accession>
<reference key="1">
    <citation type="journal article" date="2002" name="Nucleic Acids Res.">
        <title>Genome sequence of Shigella flexneri 2a: insights into pathogenicity through comparison with genomes of Escherichia coli K12 and O157.</title>
        <authorList>
            <person name="Jin Q."/>
            <person name="Yuan Z."/>
            <person name="Xu J."/>
            <person name="Wang Y."/>
            <person name="Shen Y."/>
            <person name="Lu W."/>
            <person name="Wang J."/>
            <person name="Liu H."/>
            <person name="Yang J."/>
            <person name="Yang F."/>
            <person name="Zhang X."/>
            <person name="Zhang J."/>
            <person name="Yang G."/>
            <person name="Wu H."/>
            <person name="Qu D."/>
            <person name="Dong J."/>
            <person name="Sun L."/>
            <person name="Xue Y."/>
            <person name="Zhao A."/>
            <person name="Gao Y."/>
            <person name="Zhu J."/>
            <person name="Kan B."/>
            <person name="Ding K."/>
            <person name="Chen S."/>
            <person name="Cheng H."/>
            <person name="Yao Z."/>
            <person name="He B."/>
            <person name="Chen R."/>
            <person name="Ma D."/>
            <person name="Qiang B."/>
            <person name="Wen Y."/>
            <person name="Hou Y."/>
            <person name="Yu J."/>
        </authorList>
    </citation>
    <scope>NUCLEOTIDE SEQUENCE [LARGE SCALE GENOMIC DNA]</scope>
    <source>
        <strain>301 / Serotype 2a</strain>
    </source>
</reference>
<reference key="2">
    <citation type="journal article" date="2003" name="Infect. Immun.">
        <title>Complete genome sequence and comparative genomics of Shigella flexneri serotype 2a strain 2457T.</title>
        <authorList>
            <person name="Wei J."/>
            <person name="Goldberg M.B."/>
            <person name="Burland V."/>
            <person name="Venkatesan M.M."/>
            <person name="Deng W."/>
            <person name="Fournier G."/>
            <person name="Mayhew G.F."/>
            <person name="Plunkett G. III"/>
            <person name="Rose D.J."/>
            <person name="Darling A."/>
            <person name="Mau B."/>
            <person name="Perna N.T."/>
            <person name="Payne S.M."/>
            <person name="Runyen-Janecky L.J."/>
            <person name="Zhou S."/>
            <person name="Schwartz D.C."/>
            <person name="Blattner F.R."/>
        </authorList>
    </citation>
    <scope>NUCLEOTIDE SEQUENCE [LARGE SCALE GENOMIC DNA]</scope>
    <source>
        <strain>ATCC 700930 / 2457T / Serotype 2a</strain>
    </source>
</reference>
<feature type="chain" id="PRO_0000105759" description="HTH-type transcriptional regulator TdcA">
    <location>
        <begin position="1"/>
        <end position="312"/>
    </location>
</feature>
<feature type="domain" description="HTH lysR-type" evidence="2">
    <location>
        <begin position="7"/>
        <end position="64"/>
    </location>
</feature>
<feature type="DNA-binding region" description="H-T-H motif" evidence="2">
    <location>
        <begin position="24"/>
        <end position="43"/>
    </location>
</feature>
<protein>
    <recommendedName>
        <fullName>HTH-type transcriptional regulator TdcA</fullName>
    </recommendedName>
    <alternativeName>
        <fullName>Tdc operon transcriptional activator</fullName>
    </alternativeName>
</protein>
<name>TDCA_SHIFL</name>
<evidence type="ECO:0000250" key="1"/>
<evidence type="ECO:0000255" key="2">
    <source>
        <dbReference type="PROSITE-ProRule" id="PRU00253"/>
    </source>
</evidence>
<evidence type="ECO:0000305" key="3"/>
<sequence length="312" mass="34539">MSTILLPKTQHLVVFQEVIRSGSIGSAAKELGLTQPAVSKIINDIEDYFGVELVVRKNTGVTLTPAGQLLLSRSESITREMKNMVNEISGMSSEAVVEVSFGFPSLIGFTFMSGMINKFKEVFPKAQVSMYEAQLSSFLPAIRDGRLDFAIGTLSAEMKLQDLHVEPLFESEFVLVASKSRTCTGTTTLESLKNEQWVLPQTNMGYYSELLTTLQRNGISIENIVKTDSVVTIYNLVLNADFLTVIPCDMTSPFGSNQFITIPVEETLPVAQYAAVWSKNYRIKKAASVLVELAKEYSSYNGCRRRQLIEVG</sequence>
<dbReference type="EMBL" id="AE005674">
    <property type="protein sequence ID" value="AAN44629.1"/>
    <property type="molecule type" value="Genomic_DNA"/>
</dbReference>
<dbReference type="EMBL" id="AE014073">
    <property type="protein sequence ID" value="AAP18443.1"/>
    <property type="molecule type" value="Genomic_DNA"/>
</dbReference>
<dbReference type="RefSeq" id="NP_708922.1">
    <property type="nucleotide sequence ID" value="NC_004337.2"/>
</dbReference>
<dbReference type="RefSeq" id="WP_000104211.1">
    <property type="nucleotide sequence ID" value="NZ_WPGW01000077.1"/>
</dbReference>
<dbReference type="SMR" id="P0ACQ9"/>
<dbReference type="STRING" id="198214.SF3158"/>
<dbReference type="PaxDb" id="198214-SF3158"/>
<dbReference type="GeneID" id="1027154"/>
<dbReference type="GeneID" id="93778867"/>
<dbReference type="KEGG" id="sfl:SF3158"/>
<dbReference type="KEGG" id="sfx:S3370"/>
<dbReference type="PATRIC" id="fig|198214.7.peg.3748"/>
<dbReference type="HOGENOM" id="CLU_039613_6_0_6"/>
<dbReference type="UniPathway" id="UPA00052"/>
<dbReference type="Proteomes" id="UP000001006">
    <property type="component" value="Chromosome"/>
</dbReference>
<dbReference type="Proteomes" id="UP000002673">
    <property type="component" value="Chromosome"/>
</dbReference>
<dbReference type="GO" id="GO:0005829">
    <property type="term" value="C:cytosol"/>
    <property type="evidence" value="ECO:0007669"/>
    <property type="project" value="TreeGrafter"/>
</dbReference>
<dbReference type="GO" id="GO:0003677">
    <property type="term" value="F:DNA binding"/>
    <property type="evidence" value="ECO:0007669"/>
    <property type="project" value="UniProtKB-KW"/>
</dbReference>
<dbReference type="GO" id="GO:0003700">
    <property type="term" value="F:DNA-binding transcription factor activity"/>
    <property type="evidence" value="ECO:0007669"/>
    <property type="project" value="InterPro"/>
</dbReference>
<dbReference type="GO" id="GO:0070689">
    <property type="term" value="P:L-threonine catabolic process to propionate"/>
    <property type="evidence" value="ECO:0007669"/>
    <property type="project" value="UniProtKB-UniPathway"/>
</dbReference>
<dbReference type="CDD" id="cd08418">
    <property type="entry name" value="PBP2_TdcA"/>
    <property type="match status" value="1"/>
</dbReference>
<dbReference type="FunFam" id="1.10.10.10:FF:000230">
    <property type="entry name" value="HTH-type transcriptional regulator tdcA"/>
    <property type="match status" value="1"/>
</dbReference>
<dbReference type="FunFam" id="3.40.190.290:FF:000006">
    <property type="entry name" value="HTH-type transcriptional regulator tdcA"/>
    <property type="match status" value="1"/>
</dbReference>
<dbReference type="Gene3D" id="3.40.190.290">
    <property type="match status" value="1"/>
</dbReference>
<dbReference type="Gene3D" id="1.10.10.10">
    <property type="entry name" value="Winged helix-like DNA-binding domain superfamily/Winged helix DNA-binding domain"/>
    <property type="match status" value="1"/>
</dbReference>
<dbReference type="InterPro" id="IPR050950">
    <property type="entry name" value="HTH-type_LysR_regulators"/>
</dbReference>
<dbReference type="InterPro" id="IPR005119">
    <property type="entry name" value="LysR_subst-bd"/>
</dbReference>
<dbReference type="InterPro" id="IPR047993">
    <property type="entry name" value="TdcA/AbgR_PBP2"/>
</dbReference>
<dbReference type="InterPro" id="IPR000847">
    <property type="entry name" value="Tscrpt_reg_HTH_LysR"/>
</dbReference>
<dbReference type="InterPro" id="IPR036388">
    <property type="entry name" value="WH-like_DNA-bd_sf"/>
</dbReference>
<dbReference type="InterPro" id="IPR036390">
    <property type="entry name" value="WH_DNA-bd_sf"/>
</dbReference>
<dbReference type="NCBIfam" id="NF007667">
    <property type="entry name" value="PRK10341.1"/>
    <property type="match status" value="1"/>
</dbReference>
<dbReference type="PANTHER" id="PTHR30419:SF7">
    <property type="entry name" value="HTH-TYPE TRANSCRIPTIONAL REGULATOR TDCA"/>
    <property type="match status" value="1"/>
</dbReference>
<dbReference type="PANTHER" id="PTHR30419">
    <property type="entry name" value="HTH-TYPE TRANSCRIPTIONAL REGULATOR YBHD"/>
    <property type="match status" value="1"/>
</dbReference>
<dbReference type="Pfam" id="PF00126">
    <property type="entry name" value="HTH_1"/>
    <property type="match status" value="1"/>
</dbReference>
<dbReference type="Pfam" id="PF03466">
    <property type="entry name" value="LysR_substrate"/>
    <property type="match status" value="1"/>
</dbReference>
<dbReference type="PRINTS" id="PR00039">
    <property type="entry name" value="HTHLYSR"/>
</dbReference>
<dbReference type="SUPFAM" id="SSF53850">
    <property type="entry name" value="Periplasmic binding protein-like II"/>
    <property type="match status" value="1"/>
</dbReference>
<dbReference type="SUPFAM" id="SSF46785">
    <property type="entry name" value="Winged helix' DNA-binding domain"/>
    <property type="match status" value="1"/>
</dbReference>
<dbReference type="PROSITE" id="PS50931">
    <property type="entry name" value="HTH_LYSR"/>
    <property type="match status" value="1"/>
</dbReference>
<keyword id="KW-0010">Activator</keyword>
<keyword id="KW-0238">DNA-binding</keyword>
<keyword id="KW-1185">Reference proteome</keyword>
<keyword id="KW-0804">Transcription</keyword>
<keyword id="KW-0805">Transcription regulation</keyword>
<comment type="function">
    <text evidence="1">Transcriptional activator for the tdcABCDE operon.</text>
</comment>
<comment type="pathway">
    <text>Amino-acid degradation; L-threonine degradation via propanoate pathway [regulation].</text>
</comment>
<comment type="similarity">
    <text evidence="3">Belongs to the LysR transcriptional regulatory family.</text>
</comment>